<reference key="1">
    <citation type="submission" date="2006-09" db="EMBL/GenBank/DDBJ databases">
        <title>Complete sequence of Rhodopseudomonas palustris BisA53.</title>
        <authorList>
            <consortium name="US DOE Joint Genome Institute"/>
            <person name="Copeland A."/>
            <person name="Lucas S."/>
            <person name="Lapidus A."/>
            <person name="Barry K."/>
            <person name="Detter J.C."/>
            <person name="Glavina del Rio T."/>
            <person name="Hammon N."/>
            <person name="Israni S."/>
            <person name="Dalin E."/>
            <person name="Tice H."/>
            <person name="Pitluck S."/>
            <person name="Chain P."/>
            <person name="Malfatti S."/>
            <person name="Shin M."/>
            <person name="Vergez L."/>
            <person name="Schmutz J."/>
            <person name="Larimer F."/>
            <person name="Land M."/>
            <person name="Hauser L."/>
            <person name="Pelletier D.A."/>
            <person name="Kyrpides N."/>
            <person name="Kim E."/>
            <person name="Harwood C.S."/>
            <person name="Oda Y."/>
            <person name="Richardson P."/>
        </authorList>
    </citation>
    <scope>NUCLEOTIDE SEQUENCE [LARGE SCALE GENOMIC DNA]</scope>
    <source>
        <strain>BisA53</strain>
    </source>
</reference>
<accession>Q07V74</accession>
<sequence>MTPDDPRDASDASLADATADSASRGHGSFFGRRKGHKLRAHQAELIADLLPQLSFDLAAPPPADLRALFEPGVDQVKLEIGFGGGEHLVAEAEAHPATGFIGCEPYVNGMAKILAQIEARGIRNIRLFAGDAAELLAWAPKASLARIDLIHPDPWPKRRHWKRRFVQDATVTAMARALRDDGEFRFVCDIDDYSAWTLSHLTRSPDFAWTAERARDWQNPFAGYTMTRYGRKAEREGRRAAYLHFQRNAA</sequence>
<gene>
    <name evidence="2" type="primary">trmB</name>
    <name type="ordered locus">RPE_0200</name>
</gene>
<name>TRMB_RHOP5</name>
<organism>
    <name type="scientific">Rhodopseudomonas palustris (strain BisA53)</name>
    <dbReference type="NCBI Taxonomy" id="316055"/>
    <lineage>
        <taxon>Bacteria</taxon>
        <taxon>Pseudomonadati</taxon>
        <taxon>Pseudomonadota</taxon>
        <taxon>Alphaproteobacteria</taxon>
        <taxon>Hyphomicrobiales</taxon>
        <taxon>Nitrobacteraceae</taxon>
        <taxon>Rhodopseudomonas</taxon>
    </lineage>
</organism>
<keyword id="KW-0489">Methyltransferase</keyword>
<keyword id="KW-0949">S-adenosyl-L-methionine</keyword>
<keyword id="KW-0808">Transferase</keyword>
<keyword id="KW-0819">tRNA processing</keyword>
<evidence type="ECO:0000250" key="1"/>
<evidence type="ECO:0000255" key="2">
    <source>
        <dbReference type="HAMAP-Rule" id="MF_01057"/>
    </source>
</evidence>
<evidence type="ECO:0000256" key="3">
    <source>
        <dbReference type="SAM" id="MobiDB-lite"/>
    </source>
</evidence>
<proteinExistence type="inferred from homology"/>
<feature type="chain" id="PRO_0000288213" description="tRNA (guanine-N(7)-)-methyltransferase">
    <location>
        <begin position="1"/>
        <end position="250"/>
    </location>
</feature>
<feature type="region of interest" description="Disordered" evidence="3">
    <location>
        <begin position="1"/>
        <end position="30"/>
    </location>
</feature>
<feature type="compositionally biased region" description="Basic and acidic residues" evidence="3">
    <location>
        <begin position="1"/>
        <end position="10"/>
    </location>
</feature>
<feature type="compositionally biased region" description="Low complexity" evidence="3">
    <location>
        <begin position="11"/>
        <end position="24"/>
    </location>
</feature>
<feature type="active site" evidence="1">
    <location>
        <position position="153"/>
    </location>
</feature>
<feature type="binding site" evidence="2">
    <location>
        <position position="79"/>
    </location>
    <ligand>
        <name>S-adenosyl-L-methionine</name>
        <dbReference type="ChEBI" id="CHEBI:59789"/>
    </ligand>
</feature>
<feature type="binding site" evidence="2">
    <location>
        <position position="104"/>
    </location>
    <ligand>
        <name>S-adenosyl-L-methionine</name>
        <dbReference type="ChEBI" id="CHEBI:59789"/>
    </ligand>
</feature>
<feature type="binding site" evidence="2">
    <location>
        <position position="131"/>
    </location>
    <ligand>
        <name>S-adenosyl-L-methionine</name>
        <dbReference type="ChEBI" id="CHEBI:59789"/>
    </ligand>
</feature>
<feature type="binding site" evidence="2">
    <location>
        <position position="153"/>
    </location>
    <ligand>
        <name>S-adenosyl-L-methionine</name>
        <dbReference type="ChEBI" id="CHEBI:59789"/>
    </ligand>
</feature>
<feature type="binding site" evidence="2">
    <location>
        <position position="157"/>
    </location>
    <ligand>
        <name>substrate</name>
    </ligand>
</feature>
<feature type="binding site" evidence="2">
    <location>
        <position position="189"/>
    </location>
    <ligand>
        <name>substrate</name>
    </ligand>
</feature>
<protein>
    <recommendedName>
        <fullName evidence="2">tRNA (guanine-N(7)-)-methyltransferase</fullName>
        <ecNumber evidence="2">2.1.1.33</ecNumber>
    </recommendedName>
    <alternativeName>
        <fullName evidence="2">tRNA (guanine(46)-N(7))-methyltransferase</fullName>
    </alternativeName>
    <alternativeName>
        <fullName evidence="2">tRNA(m7G46)-methyltransferase</fullName>
    </alternativeName>
</protein>
<comment type="function">
    <text evidence="2">Catalyzes the formation of N(7)-methylguanine at position 46 (m7G46) in tRNA.</text>
</comment>
<comment type="catalytic activity">
    <reaction evidence="2">
        <text>guanosine(46) in tRNA + S-adenosyl-L-methionine = N(7)-methylguanosine(46) in tRNA + S-adenosyl-L-homocysteine</text>
        <dbReference type="Rhea" id="RHEA:42708"/>
        <dbReference type="Rhea" id="RHEA-COMP:10188"/>
        <dbReference type="Rhea" id="RHEA-COMP:10189"/>
        <dbReference type="ChEBI" id="CHEBI:57856"/>
        <dbReference type="ChEBI" id="CHEBI:59789"/>
        <dbReference type="ChEBI" id="CHEBI:74269"/>
        <dbReference type="ChEBI" id="CHEBI:74480"/>
        <dbReference type="EC" id="2.1.1.33"/>
    </reaction>
</comment>
<comment type="pathway">
    <text evidence="2">tRNA modification; N(7)-methylguanine-tRNA biosynthesis.</text>
</comment>
<comment type="similarity">
    <text evidence="2">Belongs to the class I-like SAM-binding methyltransferase superfamily. TrmB family.</text>
</comment>
<dbReference type="EC" id="2.1.1.33" evidence="2"/>
<dbReference type="EMBL" id="CP000463">
    <property type="protein sequence ID" value="ABJ04160.1"/>
    <property type="molecule type" value="Genomic_DNA"/>
</dbReference>
<dbReference type="SMR" id="Q07V74"/>
<dbReference type="STRING" id="316055.RPE_0200"/>
<dbReference type="KEGG" id="rpe:RPE_0200"/>
<dbReference type="eggNOG" id="COG0220">
    <property type="taxonomic scope" value="Bacteria"/>
</dbReference>
<dbReference type="HOGENOM" id="CLU_050910_0_3_5"/>
<dbReference type="OrthoDB" id="9802090at2"/>
<dbReference type="UniPathway" id="UPA00989"/>
<dbReference type="GO" id="GO:0043527">
    <property type="term" value="C:tRNA methyltransferase complex"/>
    <property type="evidence" value="ECO:0007669"/>
    <property type="project" value="TreeGrafter"/>
</dbReference>
<dbReference type="GO" id="GO:0008176">
    <property type="term" value="F:tRNA (guanine(46)-N7)-methyltransferase activity"/>
    <property type="evidence" value="ECO:0007669"/>
    <property type="project" value="UniProtKB-UniRule"/>
</dbReference>
<dbReference type="Gene3D" id="3.40.50.150">
    <property type="entry name" value="Vaccinia Virus protein VP39"/>
    <property type="match status" value="1"/>
</dbReference>
<dbReference type="HAMAP" id="MF_01057">
    <property type="entry name" value="tRNA_methyltr_TrmB"/>
    <property type="match status" value="1"/>
</dbReference>
<dbReference type="InterPro" id="IPR029063">
    <property type="entry name" value="SAM-dependent_MTases_sf"/>
</dbReference>
<dbReference type="InterPro" id="IPR003358">
    <property type="entry name" value="tRNA_(Gua-N-7)_MeTrfase_Trmb"/>
</dbReference>
<dbReference type="InterPro" id="IPR055361">
    <property type="entry name" value="tRNA_methyltr_TrmB_bact"/>
</dbReference>
<dbReference type="NCBIfam" id="TIGR00091">
    <property type="entry name" value="tRNA (guanosine(46)-N7)-methyltransferase TrmB"/>
    <property type="match status" value="1"/>
</dbReference>
<dbReference type="PANTHER" id="PTHR23417">
    <property type="entry name" value="3-DEOXY-D-MANNO-OCTULOSONIC-ACID TRANSFERASE/TRNA GUANINE-N 7 - -METHYLTRANSFERASE"/>
    <property type="match status" value="1"/>
</dbReference>
<dbReference type="PANTHER" id="PTHR23417:SF14">
    <property type="entry name" value="PENTACOTRIPEPTIDE-REPEAT REGION OF PRORP DOMAIN-CONTAINING PROTEIN"/>
    <property type="match status" value="1"/>
</dbReference>
<dbReference type="Pfam" id="PF02390">
    <property type="entry name" value="Methyltransf_4"/>
    <property type="match status" value="1"/>
</dbReference>
<dbReference type="SUPFAM" id="SSF53335">
    <property type="entry name" value="S-adenosyl-L-methionine-dependent methyltransferases"/>
    <property type="match status" value="1"/>
</dbReference>
<dbReference type="PROSITE" id="PS51625">
    <property type="entry name" value="SAM_MT_TRMB"/>
    <property type="match status" value="1"/>
</dbReference>